<keyword id="KW-0479">Metal-binding</keyword>
<keyword id="KW-0489">Methyltransferase</keyword>
<keyword id="KW-0694">RNA-binding</keyword>
<keyword id="KW-0949">S-adenosyl-L-methionine</keyword>
<keyword id="KW-0808">Transferase</keyword>
<keyword id="KW-0819">tRNA processing</keyword>
<keyword id="KW-0820">tRNA-binding</keyword>
<keyword id="KW-0862">Zinc</keyword>
<proteinExistence type="inferred from homology"/>
<gene>
    <name evidence="1" type="primary">trm1</name>
    <name type="ordered locus">LS215_1370</name>
</gene>
<sequence length="378" mass="42904">MKLKEVTEGKVRIFVPDPKEYMIEGKFDPSWAPVFYNPKMTFNRDLSVIVVSLLKPKIILDALSATGIRGIRYYVESWKSEQLILNDKNSTAASLIQINVKNNGIENAKIYNKDANALLYEIKSEYIDIDPFGSPVPFILSSVNATIRNGIVAFTATDLSPLEGSSRTSCRRKYDAINYKLSSSKELGLRILIGKIIREAATLEKTVHPLFSFYADYYYRLFVIVESGARKADENINKNLKYFGECPRCGFQTFVDENCKTKCPICGENFIIIGPLYIGPLHNMEFLKRMIDTYSDFNYLSSFNRIQKLLNVIEKEAKYKSVFYNISKLASKLKVSAIPPIDSILECLGDASKTHFAPTGIRTDKGYEEIIRCVKSLR</sequence>
<reference key="1">
    <citation type="journal article" date="2009" name="Proc. Natl. Acad. Sci. U.S.A.">
        <title>Biogeography of the Sulfolobus islandicus pan-genome.</title>
        <authorList>
            <person name="Reno M.L."/>
            <person name="Held N.L."/>
            <person name="Fields C.J."/>
            <person name="Burke P.V."/>
            <person name="Whitaker R.J."/>
        </authorList>
    </citation>
    <scope>NUCLEOTIDE SEQUENCE [LARGE SCALE GENOMIC DNA]</scope>
    <source>
        <strain>L.S.2.15 / Lassen #1</strain>
    </source>
</reference>
<comment type="function">
    <text evidence="1">Dimethylates a single guanine residue at position 26 of a number of tRNAs using S-adenosyl-L-methionine as donor of the methyl groups.</text>
</comment>
<comment type="catalytic activity">
    <reaction evidence="1">
        <text>guanosine(26) in tRNA + 2 S-adenosyl-L-methionine = N(2)-dimethylguanosine(26) in tRNA + 2 S-adenosyl-L-homocysteine + 2 H(+)</text>
        <dbReference type="Rhea" id="RHEA:43140"/>
        <dbReference type="Rhea" id="RHEA-COMP:10359"/>
        <dbReference type="Rhea" id="RHEA-COMP:10360"/>
        <dbReference type="ChEBI" id="CHEBI:15378"/>
        <dbReference type="ChEBI" id="CHEBI:57856"/>
        <dbReference type="ChEBI" id="CHEBI:59789"/>
        <dbReference type="ChEBI" id="CHEBI:74269"/>
        <dbReference type="ChEBI" id="CHEBI:74513"/>
        <dbReference type="EC" id="2.1.1.216"/>
    </reaction>
</comment>
<comment type="similarity">
    <text evidence="1">Belongs to the class I-like SAM-binding methyltransferase superfamily. Trm1 family.</text>
</comment>
<feature type="chain" id="PRO_1000204869" description="tRNA (guanine(26)-N(2))-dimethyltransferase">
    <location>
        <begin position="1"/>
        <end position="378"/>
    </location>
</feature>
<feature type="domain" description="Trm1 methyltransferase" evidence="1">
    <location>
        <begin position="4"/>
        <end position="374"/>
    </location>
</feature>
<feature type="binding site" evidence="1">
    <location>
        <position position="44"/>
    </location>
    <ligand>
        <name>S-adenosyl-L-methionine</name>
        <dbReference type="ChEBI" id="CHEBI:59789"/>
    </ligand>
</feature>
<feature type="binding site" evidence="1">
    <location>
        <position position="69"/>
    </location>
    <ligand>
        <name>S-adenosyl-L-methionine</name>
        <dbReference type="ChEBI" id="CHEBI:59789"/>
    </ligand>
</feature>
<feature type="binding site" evidence="1">
    <location>
        <position position="87"/>
    </location>
    <ligand>
        <name>S-adenosyl-L-methionine</name>
        <dbReference type="ChEBI" id="CHEBI:59789"/>
    </ligand>
</feature>
<feature type="binding site" evidence="1">
    <location>
        <position position="114"/>
    </location>
    <ligand>
        <name>S-adenosyl-L-methionine</name>
        <dbReference type="ChEBI" id="CHEBI:59789"/>
    </ligand>
</feature>
<feature type="binding site" evidence="1">
    <location>
        <position position="115"/>
    </location>
    <ligand>
        <name>S-adenosyl-L-methionine</name>
        <dbReference type="ChEBI" id="CHEBI:59789"/>
    </ligand>
</feature>
<feature type="binding site" evidence="1">
    <location>
        <position position="246"/>
    </location>
    <ligand>
        <name>Zn(2+)</name>
        <dbReference type="ChEBI" id="CHEBI:29105"/>
    </ligand>
</feature>
<feature type="binding site" evidence="1">
    <location>
        <position position="249"/>
    </location>
    <ligand>
        <name>Zn(2+)</name>
        <dbReference type="ChEBI" id="CHEBI:29105"/>
    </ligand>
</feature>
<feature type="binding site" evidence="1">
    <location>
        <position position="263"/>
    </location>
    <ligand>
        <name>Zn(2+)</name>
        <dbReference type="ChEBI" id="CHEBI:29105"/>
    </ligand>
</feature>
<feature type="binding site" evidence="1">
    <location>
        <position position="266"/>
    </location>
    <ligand>
        <name>Zn(2+)</name>
        <dbReference type="ChEBI" id="CHEBI:29105"/>
    </ligand>
</feature>
<evidence type="ECO:0000255" key="1">
    <source>
        <dbReference type="HAMAP-Rule" id="MF_00290"/>
    </source>
</evidence>
<accession>C3MPR5</accession>
<dbReference type="EC" id="2.1.1.216" evidence="1"/>
<dbReference type="EMBL" id="CP001399">
    <property type="protein sequence ID" value="ACP35378.1"/>
    <property type="molecule type" value="Genomic_DNA"/>
</dbReference>
<dbReference type="RefSeq" id="WP_012713664.1">
    <property type="nucleotide sequence ID" value="NC_012589.1"/>
</dbReference>
<dbReference type="SMR" id="C3MPR5"/>
<dbReference type="GeneID" id="7797886"/>
<dbReference type="KEGG" id="sis:LS215_1370"/>
<dbReference type="HOGENOM" id="CLU_010862_5_1_2"/>
<dbReference type="OrthoDB" id="372177at2157"/>
<dbReference type="Proteomes" id="UP000001747">
    <property type="component" value="Chromosome"/>
</dbReference>
<dbReference type="GO" id="GO:0160104">
    <property type="term" value="F:tRNA (guanine(26)-N2)-dimethyltransferase activity"/>
    <property type="evidence" value="ECO:0007669"/>
    <property type="project" value="UniProtKB-UniRule"/>
</dbReference>
<dbReference type="GO" id="GO:0000049">
    <property type="term" value="F:tRNA binding"/>
    <property type="evidence" value="ECO:0007669"/>
    <property type="project" value="UniProtKB-KW"/>
</dbReference>
<dbReference type="GO" id="GO:0002940">
    <property type="term" value="P:tRNA N2-guanine methylation"/>
    <property type="evidence" value="ECO:0007669"/>
    <property type="project" value="TreeGrafter"/>
</dbReference>
<dbReference type="FunFam" id="3.40.50.150:FF:000272">
    <property type="entry name" value="tRNA (guanine(26)-N(2))-dimethyltransferase"/>
    <property type="match status" value="1"/>
</dbReference>
<dbReference type="Gene3D" id="3.30.56.70">
    <property type="entry name" value="N2,N2-dimethylguanosine tRNA methyltransferase, C-terminal domain"/>
    <property type="match status" value="1"/>
</dbReference>
<dbReference type="Gene3D" id="3.40.50.150">
    <property type="entry name" value="Vaccinia Virus protein VP39"/>
    <property type="match status" value="1"/>
</dbReference>
<dbReference type="HAMAP" id="MF_00290">
    <property type="entry name" value="tRNA_dimethyltr_TRM1"/>
    <property type="match status" value="1"/>
</dbReference>
<dbReference type="InterPro" id="IPR029063">
    <property type="entry name" value="SAM-dependent_MTases_sf"/>
</dbReference>
<dbReference type="InterPro" id="IPR002905">
    <property type="entry name" value="Trm1"/>
</dbReference>
<dbReference type="InterPro" id="IPR022923">
    <property type="entry name" value="TRM1_arc_bac"/>
</dbReference>
<dbReference type="InterPro" id="IPR042296">
    <property type="entry name" value="tRNA_met_Trm1_C"/>
</dbReference>
<dbReference type="NCBIfam" id="NF003331">
    <property type="entry name" value="PRK04338.1-7"/>
    <property type="match status" value="1"/>
</dbReference>
<dbReference type="NCBIfam" id="TIGR00308">
    <property type="entry name" value="TRM1"/>
    <property type="match status" value="1"/>
</dbReference>
<dbReference type="PANTHER" id="PTHR10631">
    <property type="entry name" value="N 2 ,N 2 -DIMETHYLGUANOSINE TRNA METHYLTRANSFERASE"/>
    <property type="match status" value="1"/>
</dbReference>
<dbReference type="PANTHER" id="PTHR10631:SF3">
    <property type="entry name" value="TRNA (GUANINE(26)-N(2))-DIMETHYLTRANSFERASE"/>
    <property type="match status" value="1"/>
</dbReference>
<dbReference type="Pfam" id="PF02005">
    <property type="entry name" value="TRM"/>
    <property type="match status" value="1"/>
</dbReference>
<dbReference type="SUPFAM" id="SSF53335">
    <property type="entry name" value="S-adenosyl-L-methionine-dependent methyltransferases"/>
    <property type="match status" value="1"/>
</dbReference>
<dbReference type="PROSITE" id="PS51626">
    <property type="entry name" value="SAM_MT_TRM1"/>
    <property type="match status" value="1"/>
</dbReference>
<protein>
    <recommendedName>
        <fullName evidence="1">tRNA (guanine(26)-N(2))-dimethyltransferase</fullName>
        <ecNumber evidence="1">2.1.1.216</ecNumber>
    </recommendedName>
    <alternativeName>
        <fullName evidence="1">tRNA 2,2-dimethylguanosine-26 methyltransferase</fullName>
    </alternativeName>
    <alternativeName>
        <fullName evidence="1">tRNA(guanine-26,N(2)-N(2)) methyltransferase</fullName>
    </alternativeName>
    <alternativeName>
        <fullName evidence="1">tRNA(m(2,2)G26)dimethyltransferase</fullName>
    </alternativeName>
</protein>
<organism>
    <name type="scientific">Saccharolobus islandicus (strain L.S.2.15 / Lassen #1)</name>
    <name type="common">Sulfolobus islandicus</name>
    <dbReference type="NCBI Taxonomy" id="429572"/>
    <lineage>
        <taxon>Archaea</taxon>
        <taxon>Thermoproteota</taxon>
        <taxon>Thermoprotei</taxon>
        <taxon>Sulfolobales</taxon>
        <taxon>Sulfolobaceae</taxon>
        <taxon>Saccharolobus</taxon>
    </lineage>
</organism>
<name>TRM1_SACI2</name>